<gene>
    <name evidence="1" type="primary">mnmA</name>
    <name type="synonym">trmU</name>
    <name type="ordered locus">FTN_0108</name>
</gene>
<dbReference type="EC" id="2.8.1.13" evidence="1"/>
<dbReference type="EMBL" id="CP000439">
    <property type="protein sequence ID" value="ABK89019.1"/>
    <property type="molecule type" value="Genomic_DNA"/>
</dbReference>
<dbReference type="RefSeq" id="WP_003040989.1">
    <property type="nucleotide sequence ID" value="NC_008601.1"/>
</dbReference>
<dbReference type="SMR" id="A0Q454"/>
<dbReference type="KEGG" id="ftn:FTN_0108"/>
<dbReference type="KEGG" id="ftx:AW25_92"/>
<dbReference type="Proteomes" id="UP000000762">
    <property type="component" value="Chromosome"/>
</dbReference>
<dbReference type="GO" id="GO:0005737">
    <property type="term" value="C:cytoplasm"/>
    <property type="evidence" value="ECO:0007669"/>
    <property type="project" value="UniProtKB-SubCell"/>
</dbReference>
<dbReference type="GO" id="GO:0005524">
    <property type="term" value="F:ATP binding"/>
    <property type="evidence" value="ECO:0007669"/>
    <property type="project" value="UniProtKB-KW"/>
</dbReference>
<dbReference type="GO" id="GO:0000049">
    <property type="term" value="F:tRNA binding"/>
    <property type="evidence" value="ECO:0007669"/>
    <property type="project" value="UniProtKB-KW"/>
</dbReference>
<dbReference type="GO" id="GO:0103016">
    <property type="term" value="F:tRNA-uridine 2-sulfurtransferase activity"/>
    <property type="evidence" value="ECO:0007669"/>
    <property type="project" value="UniProtKB-EC"/>
</dbReference>
<dbReference type="GO" id="GO:0002143">
    <property type="term" value="P:tRNA wobble position uridine thiolation"/>
    <property type="evidence" value="ECO:0007669"/>
    <property type="project" value="TreeGrafter"/>
</dbReference>
<dbReference type="CDD" id="cd01998">
    <property type="entry name" value="MnmA_TRMU-like"/>
    <property type="match status" value="1"/>
</dbReference>
<dbReference type="FunFam" id="2.30.30.280:FF:000001">
    <property type="entry name" value="tRNA-specific 2-thiouridylase MnmA"/>
    <property type="match status" value="1"/>
</dbReference>
<dbReference type="FunFam" id="2.40.30.10:FF:000023">
    <property type="entry name" value="tRNA-specific 2-thiouridylase MnmA"/>
    <property type="match status" value="1"/>
</dbReference>
<dbReference type="FunFam" id="3.40.50.620:FF:000004">
    <property type="entry name" value="tRNA-specific 2-thiouridylase MnmA"/>
    <property type="match status" value="1"/>
</dbReference>
<dbReference type="Gene3D" id="2.30.30.280">
    <property type="entry name" value="Adenine nucleotide alpha hydrolases-like domains"/>
    <property type="match status" value="1"/>
</dbReference>
<dbReference type="Gene3D" id="3.40.50.620">
    <property type="entry name" value="HUPs"/>
    <property type="match status" value="1"/>
</dbReference>
<dbReference type="Gene3D" id="2.40.30.10">
    <property type="entry name" value="Translation factors"/>
    <property type="match status" value="1"/>
</dbReference>
<dbReference type="HAMAP" id="MF_00144">
    <property type="entry name" value="tRNA_thiouridyl_MnmA"/>
    <property type="match status" value="1"/>
</dbReference>
<dbReference type="InterPro" id="IPR004506">
    <property type="entry name" value="MnmA-like"/>
</dbReference>
<dbReference type="InterPro" id="IPR046885">
    <property type="entry name" value="MnmA-like_C"/>
</dbReference>
<dbReference type="InterPro" id="IPR046884">
    <property type="entry name" value="MnmA-like_central"/>
</dbReference>
<dbReference type="InterPro" id="IPR023382">
    <property type="entry name" value="MnmA-like_central_sf"/>
</dbReference>
<dbReference type="InterPro" id="IPR014729">
    <property type="entry name" value="Rossmann-like_a/b/a_fold"/>
</dbReference>
<dbReference type="NCBIfam" id="NF001138">
    <property type="entry name" value="PRK00143.1"/>
    <property type="match status" value="1"/>
</dbReference>
<dbReference type="NCBIfam" id="TIGR00420">
    <property type="entry name" value="trmU"/>
    <property type="match status" value="1"/>
</dbReference>
<dbReference type="PANTHER" id="PTHR11933:SF5">
    <property type="entry name" value="MITOCHONDRIAL TRNA-SPECIFIC 2-THIOURIDYLASE 1"/>
    <property type="match status" value="1"/>
</dbReference>
<dbReference type="PANTHER" id="PTHR11933">
    <property type="entry name" value="TRNA 5-METHYLAMINOMETHYL-2-THIOURIDYLATE -METHYLTRANSFERASE"/>
    <property type="match status" value="1"/>
</dbReference>
<dbReference type="Pfam" id="PF03054">
    <property type="entry name" value="tRNA_Me_trans"/>
    <property type="match status" value="1"/>
</dbReference>
<dbReference type="Pfam" id="PF20258">
    <property type="entry name" value="tRNA_Me_trans_C"/>
    <property type="match status" value="1"/>
</dbReference>
<dbReference type="Pfam" id="PF20259">
    <property type="entry name" value="tRNA_Me_trans_M"/>
    <property type="match status" value="1"/>
</dbReference>
<dbReference type="SUPFAM" id="SSF52402">
    <property type="entry name" value="Adenine nucleotide alpha hydrolases-like"/>
    <property type="match status" value="1"/>
</dbReference>
<protein>
    <recommendedName>
        <fullName evidence="1">tRNA-specific 2-thiouridylase MnmA</fullName>
        <ecNumber evidence="1">2.8.1.13</ecNumber>
    </recommendedName>
</protein>
<feature type="chain" id="PRO_1000009526" description="tRNA-specific 2-thiouridylase MnmA">
    <location>
        <begin position="1"/>
        <end position="359"/>
    </location>
</feature>
<feature type="region of interest" description="Interaction with target base in tRNA" evidence="1">
    <location>
        <begin position="95"/>
        <end position="97"/>
    </location>
</feature>
<feature type="region of interest" description="Interaction with tRNA" evidence="1">
    <location>
        <begin position="147"/>
        <end position="149"/>
    </location>
</feature>
<feature type="region of interest" description="Interaction with tRNA" evidence="1">
    <location>
        <begin position="309"/>
        <end position="310"/>
    </location>
</feature>
<feature type="active site" description="Nucleophile" evidence="1">
    <location>
        <position position="100"/>
    </location>
</feature>
<feature type="active site" description="Cysteine persulfide intermediate" evidence="1">
    <location>
        <position position="197"/>
    </location>
</feature>
<feature type="binding site" evidence="1">
    <location>
        <begin position="9"/>
        <end position="16"/>
    </location>
    <ligand>
        <name>ATP</name>
        <dbReference type="ChEBI" id="CHEBI:30616"/>
    </ligand>
</feature>
<feature type="binding site" evidence="1">
    <location>
        <position position="35"/>
    </location>
    <ligand>
        <name>ATP</name>
        <dbReference type="ChEBI" id="CHEBI:30616"/>
    </ligand>
</feature>
<feature type="binding site" evidence="1">
    <location>
        <position position="124"/>
    </location>
    <ligand>
        <name>ATP</name>
        <dbReference type="ChEBI" id="CHEBI:30616"/>
    </ligand>
</feature>
<feature type="site" description="Interaction with tRNA" evidence="1">
    <location>
        <position position="125"/>
    </location>
</feature>
<feature type="site" description="Interaction with tRNA" evidence="1">
    <location>
        <position position="342"/>
    </location>
</feature>
<feature type="disulfide bond" description="Alternate" evidence="1">
    <location>
        <begin position="100"/>
        <end position="197"/>
    </location>
</feature>
<organism>
    <name type="scientific">Francisella tularensis subsp. novicida (strain U112)</name>
    <dbReference type="NCBI Taxonomy" id="401614"/>
    <lineage>
        <taxon>Bacteria</taxon>
        <taxon>Pseudomonadati</taxon>
        <taxon>Pseudomonadota</taxon>
        <taxon>Gammaproteobacteria</taxon>
        <taxon>Thiotrichales</taxon>
        <taxon>Francisellaceae</taxon>
        <taxon>Francisella</taxon>
    </lineage>
</organism>
<accession>A0Q454</accession>
<proteinExistence type="inferred from homology"/>
<name>MNMA_FRATN</name>
<comment type="function">
    <text evidence="1">Catalyzes the 2-thiolation of uridine at the wobble position (U34) of tRNA, leading to the formation of s(2)U34.</text>
</comment>
<comment type="catalytic activity">
    <reaction evidence="1">
        <text>S-sulfanyl-L-cysteinyl-[protein] + uridine(34) in tRNA + AH2 + ATP = 2-thiouridine(34) in tRNA + L-cysteinyl-[protein] + A + AMP + diphosphate + H(+)</text>
        <dbReference type="Rhea" id="RHEA:47032"/>
        <dbReference type="Rhea" id="RHEA-COMP:10131"/>
        <dbReference type="Rhea" id="RHEA-COMP:11726"/>
        <dbReference type="Rhea" id="RHEA-COMP:11727"/>
        <dbReference type="Rhea" id="RHEA-COMP:11728"/>
        <dbReference type="ChEBI" id="CHEBI:13193"/>
        <dbReference type="ChEBI" id="CHEBI:15378"/>
        <dbReference type="ChEBI" id="CHEBI:17499"/>
        <dbReference type="ChEBI" id="CHEBI:29950"/>
        <dbReference type="ChEBI" id="CHEBI:30616"/>
        <dbReference type="ChEBI" id="CHEBI:33019"/>
        <dbReference type="ChEBI" id="CHEBI:61963"/>
        <dbReference type="ChEBI" id="CHEBI:65315"/>
        <dbReference type="ChEBI" id="CHEBI:87170"/>
        <dbReference type="ChEBI" id="CHEBI:456215"/>
        <dbReference type="EC" id="2.8.1.13"/>
    </reaction>
</comment>
<comment type="subcellular location">
    <subcellularLocation>
        <location evidence="1">Cytoplasm</location>
    </subcellularLocation>
</comment>
<comment type="similarity">
    <text evidence="1">Belongs to the MnmA/TRMU family.</text>
</comment>
<sequence length="359" mass="40198">MENKKVIVGISGGVDSSVSALLLKQQGYDVTGVFMKNWEEDDTDEFCSAEQDIADAQAVCDSIGIPFKKINFAAEYWDNVFEHFLIEYKAGRTPNPDILCNKEIKFKAFLSYVHLLGGDYIATGHYARTRVLEDGSVQLVKGLDDNKDQTYFLYTLGQEQLRQTIFPIGNIEKSKVREIAKENNLVTFDKKDSTGICFIGERKFKEFLSKFLPAQKGEIHDENGIKIGMHDGLMYYTIGQRQGLGIGGVKDRPEVPWFAAKKDLENNVLIAVQGHDHPLLFKQSLQAIELSWVAGMAPADKFRCAAKVRYRQKDQSCEVEVNQDGSVNVTFDQPQRAITPGQSVVFYIDDVCLGGGVII</sequence>
<reference key="1">
    <citation type="journal article" date="2007" name="Genome Biol.">
        <title>Comparison of Francisella tularensis genomes reveals evolutionary events associated with the emergence of human pathogenic strains.</title>
        <authorList>
            <person name="Rohmer L."/>
            <person name="Fong C."/>
            <person name="Abmayr S."/>
            <person name="Wasnick M."/>
            <person name="Larson Freeman T.J."/>
            <person name="Radey M."/>
            <person name="Guina T."/>
            <person name="Svensson K."/>
            <person name="Hayden H.S."/>
            <person name="Jacobs M."/>
            <person name="Gallagher L.A."/>
            <person name="Manoil C."/>
            <person name="Ernst R.K."/>
            <person name="Drees B."/>
            <person name="Buckley D."/>
            <person name="Haugen E."/>
            <person name="Bovee D."/>
            <person name="Zhou Y."/>
            <person name="Chang J."/>
            <person name="Levy R."/>
            <person name="Lim R."/>
            <person name="Gillett W."/>
            <person name="Guenthener D."/>
            <person name="Kang A."/>
            <person name="Shaffer S.A."/>
            <person name="Taylor G."/>
            <person name="Chen J."/>
            <person name="Gallis B."/>
            <person name="D'Argenio D.A."/>
            <person name="Forsman M."/>
            <person name="Olson M.V."/>
            <person name="Goodlett D.R."/>
            <person name="Kaul R."/>
            <person name="Miller S.I."/>
            <person name="Brittnacher M.J."/>
        </authorList>
    </citation>
    <scope>NUCLEOTIDE SEQUENCE [LARGE SCALE GENOMIC DNA]</scope>
    <source>
        <strain>U112</strain>
    </source>
</reference>
<evidence type="ECO:0000255" key="1">
    <source>
        <dbReference type="HAMAP-Rule" id="MF_00144"/>
    </source>
</evidence>
<keyword id="KW-0067">ATP-binding</keyword>
<keyword id="KW-0963">Cytoplasm</keyword>
<keyword id="KW-1015">Disulfide bond</keyword>
<keyword id="KW-0547">Nucleotide-binding</keyword>
<keyword id="KW-0694">RNA-binding</keyword>
<keyword id="KW-0808">Transferase</keyword>
<keyword id="KW-0819">tRNA processing</keyword>
<keyword id="KW-0820">tRNA-binding</keyword>